<evidence type="ECO:0000250" key="1"/>
<evidence type="ECO:0000255" key="2"/>
<evidence type="ECO:0000255" key="3">
    <source>
        <dbReference type="PROSITE-ProRule" id="PRU00258"/>
    </source>
</evidence>
<evidence type="ECO:0000255" key="4">
    <source>
        <dbReference type="PROSITE-ProRule" id="PRU01348"/>
    </source>
</evidence>
<evidence type="ECO:0000255" key="5">
    <source>
        <dbReference type="PROSITE-ProRule" id="PRU01363"/>
    </source>
</evidence>
<evidence type="ECO:0000255" key="6">
    <source>
        <dbReference type="PROSITE-ProRule" id="PRU10022"/>
    </source>
</evidence>
<evidence type="ECO:0000256" key="7">
    <source>
        <dbReference type="SAM" id="MobiDB-lite"/>
    </source>
</evidence>
<evidence type="ECO:0000269" key="8">
    <source>
    </source>
</evidence>
<evidence type="ECO:0000269" key="9">
    <source>
    </source>
</evidence>
<evidence type="ECO:0000269" key="10">
    <source>
    </source>
</evidence>
<evidence type="ECO:0000305" key="11"/>
<evidence type="ECO:0007829" key="12">
    <source>
        <dbReference type="PDB" id="4J1Q"/>
    </source>
</evidence>
<evidence type="ECO:0007829" key="13">
    <source>
        <dbReference type="PDB" id="4NA1"/>
    </source>
</evidence>
<evidence type="ECO:0007829" key="14">
    <source>
        <dbReference type="PDB" id="4NA2"/>
    </source>
</evidence>
<evidence type="ECO:0007829" key="15">
    <source>
        <dbReference type="PDB" id="5KTK"/>
    </source>
</evidence>
<proteinExistence type="evidence at protein level"/>
<keyword id="KW-0002">3D-structure</keyword>
<keyword id="KW-0012">Acyltransferase</keyword>
<keyword id="KW-0045">Antibiotic biosynthesis</keyword>
<keyword id="KW-0175">Coiled coil</keyword>
<keyword id="KW-0963">Cytoplasm</keyword>
<keyword id="KW-0436">Ligase</keyword>
<keyword id="KW-0511">Multifunctional enzyme</keyword>
<keyword id="KW-0521">NADP</keyword>
<keyword id="KW-0596">Phosphopantetheine</keyword>
<keyword id="KW-0597">Phosphoprotein</keyword>
<keyword id="KW-1185">Reference proteome</keyword>
<keyword id="KW-0677">Repeat</keyword>
<keyword id="KW-0808">Transferase</keyword>
<sequence length="5043" mass="562814">MRNNDNIRILTNPSVSHGEPLHISEKQPATIPEVLYRTATELGDTKGIIYLQPDGTEVYQSYRRLWDDGLRIAKGLRQSGLKAKQSVILQLGDNSQLLPAFWGCVLTGVVPAPLAVPPTYAESSSGTQKLKDAWTLLDKPAVITDRGMHQEMLDWAKEQGLEGFRAIIVEDLLSAEADTDWHQSSPEDLALLLLTSGSTGTPKAVMLNHRNIMSMVKGIIQMQGFTREDITFNWMPFDHVGGIGMLHLRDVYLGCQEINVSSETILMEPLKWLDWIDHYRASVTWAPNFAFGLVTDFAEEIKDKKWDLSSMRYMLNGGEAMVAKVGRRILELLEPHGLPADAIRPAWGMSETSSGVIFSHEFTRAGTSDDDHFVEIGSPIPGFSMRIVNDHNELVEEGEIGRFQVSGLSVTSGYYQRPDLNESVFTEDGWFETGDLGFLRNGRLTITGRTKDAIIINGINYYSHAIESAVEELPEIETSYTAACAVRLGQNSTDQLAIFFVTSAKLNDEQMSQLLRNIQSHVSQVIGVTPEYLLPVQKEEIPKTAIGKIQRTQLKTSFENGEFDHLLHKPNRMNDAVQDEGIQQADQVKRVREEIQKHLLTCLTEELHVSHDWVEPNANIQSLGVNSIKMMKLIRSIEKNYHIKLTAREIHQYPTIERLASYLSEHEDLSSLSADKKGTDTYKTEPERSQATFQPLSEVQKGLWTLQKMSPEKSAYHVPLCFKFSSGLHHETFQQAFGLVLNQHPILKHVIQEKDGVPFLKNEPALSIEIKTENISSLKESDIPAFLRKKVKEPYVKENSPLVRVMSFSRSEQEHFLLVVIHHLIFDGVSSVTFIRSLFDTYQLLLKGQQPEKAVSPAIYHDFAAWEKNMLAGKDGVKHRTYWQKQLSGTLPNLQLPNVSASSVDSQFREDTYTRRLSSGFMNQVRTFAKEHSVNVTTVFLSCYMMLLGRYTGQKEQIVGMPAMVRPEERFDDAIGHFLNMLPIRSELNPADTFSSFISKLQLTILDGLDHAAYPFPKMVRDLNIPRSQAGSPVFQTAFFYQNFLQSGSYQSLLSRYADFFSVDFVEYIHQEGEYELVFELWETEEKMELNIKYNTGLFDAASISAMFDHFVYVTEQAMLNPSQPLKEYSLLPEAEKQMILKTWNATGKTYPYITFHELFEQQAKKTPDRAAVSYEGQTLTYRELDEKSTQLAIYLQAHGVGPDRLAGIYVDRSLDMLVGLLAILKAGGAYVPLDPSYPAERLEYMLEDSEVFITLTTSELVNTLSWNGVTTALLDQDWDEIAQTASDRKVLTRTVTPENLAYVIYTSGSTGKPKGVMIPHKALTNFLVSMGETPGLTAEDKMLAVTTYCFDIAALELFLPLIKGAHCYICQTEHTKDVEKLKRDIRAIKPTVMQATPATWKMLFYSGWENEESVKILCGGEALPETLKRYFLDTGSEAWNMFGPTETTIWSAVQRINVECSHATIGRPIANTQIYITDSQLAPVPAGVPGELCIAGDGVAKGYYKKEELTDSRFIDNPFEPGSKLYRTGDMARWLTGGRIEYIGRIDNQVKIRGFRIELGDIESRLSEHPGILECVVVADMDNLAAYYTAKHANASLTARELRHFVKNALPAYMVPSYFIQLDHMPLTPNGKIDRNSLKNIDLSGEQLKQRQTSPKNIQDTVFTIWQEVLKTSDIEWDDGFFDVGGDSLLAVTVADRIKHELSCEFSVTDLFEYSTIKNISQYITEQRMGDASDHIPTDPAAHIEDQSTEMSDLPDYYDDSVAIIGISCEFPGAKNHDEFWENLRDGKESIAFFNKEELQRFGISKEIAENADYVPAKASIDGKDRFDPSFFQISPKDAEFMDPQLRMLLTHSWKAIEDAGYAARQIPQTSVFMSASNNSYRALLPSDTTESLETPDGYVSWVLAQSGTIPTMISHKLGLRGPSYFVHANCSSSLIGLHSAYKSLLSGESDYALVGGATLHTESNIGYVHQPGLNFSSDGHIKAFDASADGMIGGEGVAVVLLKKAADAVKDGDHIYALLRGIGVNNDGADKVGFYAPSVKGQADVVQQVMNQTKVQPESICYVEAHGTGTKLGDPIELAALTNVYRQYTNKTQFCGIGSVKTNIGHLDTAAGLAGCIKVVMSLYHQELAPSVNYKEPNPNTDLASSPFYVVDQKKTLSREIKTHRAALSSFGLGGTNTHAIFEQFKRDSDKGKIDGTCIVPISAKNKERLQEYAEDILAYLERRGFENSQLPDFAYTLQVGREAMEHRVVFIADHVNELKQRLTDFINGNTAIEGCFQGSKHNAREVSWLTEDEDSAELIRKWMAKGKVNKLAEMWSKGAHIDWMQLYKGERPNRMSLPTYPFAKERYWPSQDDRKPVAQISGNQTGIGSIHPLLHQNTSDFSEQKFSSVFTGDEFFLRDHVVRGKPVLPGVAYLEMAYAAINQAAGSEIGQDVRIRLNHTVWVQPVVVDRHSAQVDISLFPEEDGKITFDIYSTQEDGDDPVIHSQGSAELASAAETPVADLTEMSRRCGKGKMSPDQFYEEGRSRGMFHGPAFQGIKNVNIGNREVLAQLQLPEIVSGTNEQFVLHPSIMDSALQTATICIMQELTDQKLILPFALEELEVIKGCSSSMWAYARLSDSDHSGGVVQKADIDVIDESGTVCVRIKGFSTRVLEGEVHTSKPSTRHERLMLEPVWEKQNEEREDEDLSYTEHIIVLFETERSVTDSIASHMKDARVITLNEAVGHIAERYQCYMQNIFELLQSKVRKLSAGRIIIQAIVPLEKEKQLFAGVSGLFKTAEIEFSKLTAQVIEIEKPEEMIDLHLKLKDDSRRPFDKQIRYEAGYRFVKGWREMVLPSADTLHMPWRDEGVYLITGGAGSLGLLFAKEIANRTGRSTIVLTGRSVLSEDKENELEALRSIGAEVVYREADVSDQHAVRHLLEEIKERYGTLNGIIHGAGSSKDRFIIHKTNEEFQEVLQPKVSGLLHVDECSKDFPLDFFIFFSSVSGCLGNAGQADYAAANSFMDAFAEYRRSLAASKKRFGSTISFNWPLWEEGGMQVGAEDEKRMLKTTGMVPMPTDSGLKAFYQGIVSDKPQVFVMEGQLQKMKQKLLSAGSKAKRNDQRKADQDQGQTRKLEAALIQMVGAILKVNTDDIDVNTELSEYGFDSVTFTVFTNKINEKFQLELTPTIFFEYGSVQSLAEYVVAAYQGEWNQDATAKGKDERTNLVHSLSSLEASLSNMVSAILKVNSEDIDVNTELSEYGFDSVTFTVFTNKINEEFQLELTPTIFFEYGSLHSLAEYLTVEHGDTLVQEREKPEGQEELQTKSSEAPKITSRRKRRFTQPIIAKAERNKKQAADFEPVAIVGISGRFPGAMDIDEFWKNLEEGKDSITEVPKDRWDWREHYGNPDTDVNKTDIKWGGFIDGVAEFDPLFFGISPREADYVDPQQRLLMTYVWKALEDAGCSPQSLSGTGTGIFIGTGNTGYKDLFHRANLPIEGHAATGHMIPSVGPNRMSYFLNIHGPSEPVETACSSSLVAIHRAVTAMQNGDCEMAIAGGVNTILTEEAHISYSKAGMLSTDGRCKTFSADANGYVRGEGVGMVMLKKLEDAERDGNHIYGVIRGTAENHGGRANTLTSPNPKAQADLLVRAYRQADIDPSTVTYIEAHGTGTELGDPIEINGLKAAFKELSNMRGESQPDVPDHRCGIGSVKSNIGHLELAAGISGLIKVLLQMKHKTLVKSLHCETLNPYLQLTDSPFYIVQEKQEWKSVTDRDGNELPRRAGISSFGIGGVNAHIVIEEYMPKANSEHTATEQPNVIVLSAKNKSRLIDRASQLLEVIRNKKYTDQDLHRIAYTLQVGREEMDERLACVAGTMQELEEKLQAFVDGKEETDEFFRGQSHRNKETQTIFTADEDMALALDAWIRKRKYAKLADLWVKGVSIQWNTLYGETKPRLISLPSYPFAKDHYWVPAKEHSERDKKELVNAIEDRAACFLTKQWSLSPIGSAVPGTRTVAILCCQETADLAAEVSSYFPNHLLIDVSRIENDQSDIDWKEFDGLVDVIGCGWDDEGRLDWIEWVQRLVEFGHKEGLRLLCVTKGLESFQNTSVRMAGASRAGLYRMLQCEYSHLISRHMDAEEVTDHRRLAKLIADEFYSDSYDAEVCYRDGLRYQAFLKAHPETGKATEQSAVFPKDHVLLITGGTRGIGLLCARHFAECYGVKKLVLTGREQLPPREEWARFKTSNTSLAEKIQAVRELEAKGVQVEMLSLTLSDDAQVEQTLQHIKRTLGPIGGVIHCAGLTDMDTLAFIRKTSDDIQRVLEPKVSGLTTLYRHVCNEPLQFFVLFSSVSAIIPELSAGQADYAMANSYMDYFAEAHQKHAPIISVQWPNWKETGMGEVTNQAYRDSGLLSITNSEGLRFLDQIVSKKFGPVVLPAMANQTNWEPELLMKRRKPHEGGLQEAALQSPPARDIEEADEVSKCDGLLSETQSWLIDLFTEELRIDREDFEIDGLFQDYGVDSIILAQVLQRINRKLEAALDPSILYEYPTIQRFADWLIGSYSERLSALFGGRISDASAPLENKIEAEASVPGKDRALTPQIQAPAILSPDSHAEGIAVVGLSCRFPGAETLESYWSLLSEGRSSIGPIPAERWGCKTPYYAGVIDGVSYFDPDFFLLHEEDVRAMDPQALLVLEECLKLLYHAGYTPEEIKGKPVGVYIGGRSQHKPDEDSLDHAKNPIVTVGQNYLAANLSQFFDVRGPSVVVDTACSSALVGMNMAIQALRGGDIQSAIVGGVSLLSSDASHRLFDRRGILSKHSSFHVFDERADGVVLGEGVGMVMLKTVKQALEDGDIIYAVVKAASVNNDGRTAGPATPNLEAQKEVMKDALFKSGKKPEDISYLEANGSGSIVTDLLELKAIQSVYRSGHSSPLSLGSIKPNIGHPLCAEGIASFIKVVLMLKERRFVPFLSGEKEMAHFDQQKANITFSRALEKWTDSQPTAAINCFADGGTNAHVIVEAWEKDEKHAIKRSPISPPQLKKRMLSPGEPKLEAETSKMTAANIWDTYEVEV</sequence>
<gene>
    <name type="primary">pksJ</name>
    <name type="synonym">pksK</name>
    <name type="ordered locus">BSU17180</name>
</gene>
<name>PKSJ_BACSU</name>
<protein>
    <recommendedName>
        <fullName>Polyketide synthase PksJ</fullName>
        <shortName>PKS</shortName>
    </recommendedName>
</protein>
<dbReference type="EMBL" id="U11039">
    <property type="protein sequence ID" value="AAA85143.1"/>
    <property type="status" value="ALT_SEQ"/>
    <property type="molecule type" value="Genomic_DNA"/>
</dbReference>
<dbReference type="EMBL" id="U11039">
    <property type="protein sequence ID" value="AAA85144.1"/>
    <property type="status" value="ALT_SEQ"/>
    <property type="molecule type" value="Genomic_DNA"/>
</dbReference>
<dbReference type="EMBL" id="AL009126">
    <property type="protein sequence ID" value="CAB13589.3"/>
    <property type="molecule type" value="Genomic_DNA"/>
</dbReference>
<dbReference type="PIR" id="A69679">
    <property type="entry name" value="A69679"/>
</dbReference>
<dbReference type="PIR" id="H69678">
    <property type="entry name" value="H69678"/>
</dbReference>
<dbReference type="RefSeq" id="NP_389598.3">
    <property type="nucleotide sequence ID" value="NC_000964.3"/>
</dbReference>
<dbReference type="RefSeq" id="WP_003245563.1">
    <property type="nucleotide sequence ID" value="NZ_OZ025638.1"/>
</dbReference>
<dbReference type="PDB" id="4J1Q">
    <property type="method" value="X-ray"/>
    <property type="resolution" value="2.35 A"/>
    <property type="chains" value="A=2669-3111"/>
</dbReference>
<dbReference type="PDB" id="4J1S">
    <property type="method" value="X-ray"/>
    <property type="resolution" value="3.01 A"/>
    <property type="chains" value="A=2669-3111"/>
</dbReference>
<dbReference type="PDB" id="4NA1">
    <property type="method" value="X-ray"/>
    <property type="resolution" value="1.95 A"/>
    <property type="chains" value="A/B=3336-3951"/>
</dbReference>
<dbReference type="PDB" id="4NA2">
    <property type="method" value="X-ray"/>
    <property type="resolution" value="2.30 A"/>
    <property type="chains" value="A/B=3336-3951"/>
</dbReference>
<dbReference type="PDB" id="4NA3">
    <property type="method" value="X-ray"/>
    <property type="resolution" value="2.89 A"/>
    <property type="chains" value="A/B=3336-3951"/>
</dbReference>
<dbReference type="PDB" id="5KTK">
    <property type="method" value="X-ray"/>
    <property type="resolution" value="1.98 A"/>
    <property type="chains" value="A=3954-4472"/>
</dbReference>
<dbReference type="PDB" id="8QK4">
    <property type="method" value="X-ray"/>
    <property type="resolution" value="1.90 A"/>
    <property type="chains" value="A/B=2360-2666"/>
</dbReference>
<dbReference type="PDBsum" id="4J1Q"/>
<dbReference type="PDBsum" id="4J1S"/>
<dbReference type="PDBsum" id="4NA1"/>
<dbReference type="PDBsum" id="4NA2"/>
<dbReference type="PDBsum" id="4NA3"/>
<dbReference type="PDBsum" id="5KTK"/>
<dbReference type="PDBsum" id="8QK4"/>
<dbReference type="SMR" id="P40806"/>
<dbReference type="DIP" id="DIP-60662N"/>
<dbReference type="FunCoup" id="P40806">
    <property type="interactions" value="9"/>
</dbReference>
<dbReference type="IntAct" id="P40806">
    <property type="interactions" value="7"/>
</dbReference>
<dbReference type="STRING" id="224308.BSU17180"/>
<dbReference type="PaxDb" id="224308-BSU17180"/>
<dbReference type="EnsemblBacteria" id="CAB13589">
    <property type="protein sequence ID" value="CAB13589"/>
    <property type="gene ID" value="BSU_17180"/>
</dbReference>
<dbReference type="GeneID" id="940043"/>
<dbReference type="KEGG" id="bsu:BSU17180"/>
<dbReference type="PATRIC" id="fig|224308.179.peg.1863"/>
<dbReference type="eggNOG" id="COG0300">
    <property type="taxonomic scope" value="Bacteria"/>
</dbReference>
<dbReference type="eggNOG" id="COG0318">
    <property type="taxonomic scope" value="Bacteria"/>
</dbReference>
<dbReference type="eggNOG" id="COG1020">
    <property type="taxonomic scope" value="Bacteria"/>
</dbReference>
<dbReference type="eggNOG" id="COG1028">
    <property type="taxonomic scope" value="Bacteria"/>
</dbReference>
<dbReference type="eggNOG" id="COG3321">
    <property type="taxonomic scope" value="Bacteria"/>
</dbReference>
<dbReference type="InParanoid" id="P40806"/>
<dbReference type="OrthoDB" id="2897140at2"/>
<dbReference type="PhylomeDB" id="P40806"/>
<dbReference type="BioCyc" id="BSUB:BSU17180-MONOMER"/>
<dbReference type="UniPathway" id="UPA01003"/>
<dbReference type="EvolutionaryTrace" id="P40806"/>
<dbReference type="Proteomes" id="UP000001570">
    <property type="component" value="Chromosome"/>
</dbReference>
<dbReference type="GO" id="GO:0005737">
    <property type="term" value="C:cytoplasm"/>
    <property type="evidence" value="ECO:0000318"/>
    <property type="project" value="GO_Central"/>
</dbReference>
<dbReference type="GO" id="GO:0004315">
    <property type="term" value="F:3-oxoacyl-[acyl-carrier-protein] synthase activity"/>
    <property type="evidence" value="ECO:0007669"/>
    <property type="project" value="InterPro"/>
</dbReference>
<dbReference type="GO" id="GO:0004312">
    <property type="term" value="F:fatty acid synthase activity"/>
    <property type="evidence" value="ECO:0000318"/>
    <property type="project" value="GO_Central"/>
</dbReference>
<dbReference type="GO" id="GO:0016874">
    <property type="term" value="F:ligase activity"/>
    <property type="evidence" value="ECO:0007669"/>
    <property type="project" value="UniProtKB-KW"/>
</dbReference>
<dbReference type="GO" id="GO:0031177">
    <property type="term" value="F:phosphopantetheine binding"/>
    <property type="evidence" value="ECO:0007669"/>
    <property type="project" value="InterPro"/>
</dbReference>
<dbReference type="GO" id="GO:0017000">
    <property type="term" value="P:antibiotic biosynthetic process"/>
    <property type="evidence" value="ECO:0007669"/>
    <property type="project" value="UniProtKB-KW"/>
</dbReference>
<dbReference type="GO" id="GO:0071770">
    <property type="term" value="P:DIM/DIP cell wall layer assembly"/>
    <property type="evidence" value="ECO:0000318"/>
    <property type="project" value="GO_Central"/>
</dbReference>
<dbReference type="GO" id="GO:0006633">
    <property type="term" value="P:fatty acid biosynthetic process"/>
    <property type="evidence" value="ECO:0000318"/>
    <property type="project" value="GO_Central"/>
</dbReference>
<dbReference type="GO" id="GO:0044550">
    <property type="term" value="P:secondary metabolite biosynthetic process"/>
    <property type="evidence" value="ECO:0007669"/>
    <property type="project" value="UniProtKB-ARBA"/>
</dbReference>
<dbReference type="CDD" id="cd12116">
    <property type="entry name" value="A_NRPS_Ta1_like"/>
    <property type="match status" value="1"/>
</dbReference>
<dbReference type="CDD" id="cd05906">
    <property type="entry name" value="A_NRPS_TubE_like"/>
    <property type="match status" value="1"/>
</dbReference>
<dbReference type="CDD" id="cd20484">
    <property type="entry name" value="C_PKS-NRPS_PksJ-like"/>
    <property type="match status" value="1"/>
</dbReference>
<dbReference type="CDD" id="cd08953">
    <property type="entry name" value="KR_2_SDR_x"/>
    <property type="match status" value="2"/>
</dbReference>
<dbReference type="CDD" id="cd00833">
    <property type="entry name" value="PKS"/>
    <property type="match status" value="3"/>
</dbReference>
<dbReference type="FunFam" id="3.40.50.12780:FF:000012">
    <property type="entry name" value="Non-ribosomal peptide synthetase"/>
    <property type="match status" value="1"/>
</dbReference>
<dbReference type="FunFam" id="3.40.50.980:FF:000001">
    <property type="entry name" value="Non-ribosomal peptide synthetase"/>
    <property type="match status" value="1"/>
</dbReference>
<dbReference type="FunFam" id="2.30.38.10:FF:000001">
    <property type="entry name" value="Non-ribosomal peptide synthetase PvdI"/>
    <property type="match status" value="1"/>
</dbReference>
<dbReference type="FunFam" id="3.40.47.10:FF:000019">
    <property type="entry name" value="Polyketide synthase type I"/>
    <property type="match status" value="1"/>
</dbReference>
<dbReference type="Gene3D" id="1.10.1240.100">
    <property type="match status" value="1"/>
</dbReference>
<dbReference type="Gene3D" id="3.30.300.30">
    <property type="match status" value="2"/>
</dbReference>
<dbReference type="Gene3D" id="3.30.70.3290">
    <property type="match status" value="1"/>
</dbReference>
<dbReference type="Gene3D" id="3.40.47.10">
    <property type="match status" value="3"/>
</dbReference>
<dbReference type="Gene3D" id="3.40.50.980">
    <property type="match status" value="2"/>
</dbReference>
<dbReference type="Gene3D" id="1.10.1200.10">
    <property type="entry name" value="ACP-like"/>
    <property type="match status" value="5"/>
</dbReference>
<dbReference type="Gene3D" id="3.30.559.10">
    <property type="entry name" value="Chloramphenicol acetyltransferase-like domain"/>
    <property type="match status" value="1"/>
</dbReference>
<dbReference type="Gene3D" id="2.30.38.10">
    <property type="entry name" value="Luciferase, Domain 3"/>
    <property type="match status" value="1"/>
</dbReference>
<dbReference type="Gene3D" id="3.40.50.12780">
    <property type="entry name" value="N-terminal domain of ligase-like"/>
    <property type="match status" value="1"/>
</dbReference>
<dbReference type="Gene3D" id="3.40.50.720">
    <property type="entry name" value="NAD(P)-binding Rossmann-like Domain"/>
    <property type="match status" value="2"/>
</dbReference>
<dbReference type="Gene3D" id="3.30.559.30">
    <property type="entry name" value="Nonribosomal peptide synthetase, condensation domain"/>
    <property type="match status" value="1"/>
</dbReference>
<dbReference type="Gene3D" id="3.10.129.110">
    <property type="entry name" value="Polyketide synthase dehydratase"/>
    <property type="match status" value="1"/>
</dbReference>
<dbReference type="InterPro" id="IPR010071">
    <property type="entry name" value="AA_adenyl_dom"/>
</dbReference>
<dbReference type="InterPro" id="IPR036736">
    <property type="entry name" value="ACP-like_sf"/>
</dbReference>
<dbReference type="InterPro" id="IPR025110">
    <property type="entry name" value="AMP-bd_C"/>
</dbReference>
<dbReference type="InterPro" id="IPR045851">
    <property type="entry name" value="AMP-bd_C_sf"/>
</dbReference>
<dbReference type="InterPro" id="IPR020845">
    <property type="entry name" value="AMP-binding_CS"/>
</dbReference>
<dbReference type="InterPro" id="IPR000873">
    <property type="entry name" value="AMP-dep_synth/lig_dom"/>
</dbReference>
<dbReference type="InterPro" id="IPR042099">
    <property type="entry name" value="ANL_N_sf"/>
</dbReference>
<dbReference type="InterPro" id="IPR023213">
    <property type="entry name" value="CAT-like_dom_sf"/>
</dbReference>
<dbReference type="InterPro" id="IPR001242">
    <property type="entry name" value="Condensatn"/>
</dbReference>
<dbReference type="InterPro" id="IPR018201">
    <property type="entry name" value="Ketoacyl_synth_AS"/>
</dbReference>
<dbReference type="InterPro" id="IPR014031">
    <property type="entry name" value="Ketoacyl_synth_C"/>
</dbReference>
<dbReference type="InterPro" id="IPR014030">
    <property type="entry name" value="Ketoacyl_synth_N"/>
</dbReference>
<dbReference type="InterPro" id="IPR036291">
    <property type="entry name" value="NAD(P)-bd_dom_sf"/>
</dbReference>
<dbReference type="InterPro" id="IPR020841">
    <property type="entry name" value="PKS_Beta-ketoAc_synthase_dom"/>
</dbReference>
<dbReference type="InterPro" id="IPR042104">
    <property type="entry name" value="PKS_dehydratase_sf"/>
</dbReference>
<dbReference type="InterPro" id="IPR020807">
    <property type="entry name" value="PKS_DH"/>
</dbReference>
<dbReference type="InterPro" id="IPR049551">
    <property type="entry name" value="PKS_DH_C"/>
</dbReference>
<dbReference type="InterPro" id="IPR049552">
    <property type="entry name" value="PKS_DH_N"/>
</dbReference>
<dbReference type="InterPro" id="IPR013968">
    <property type="entry name" value="PKS_KR"/>
</dbReference>
<dbReference type="InterPro" id="IPR049900">
    <property type="entry name" value="PKS_mFAS_DH"/>
</dbReference>
<dbReference type="InterPro" id="IPR050091">
    <property type="entry name" value="PKS_NRPS_Biosynth_Enz"/>
</dbReference>
<dbReference type="InterPro" id="IPR020806">
    <property type="entry name" value="PKS_PP-bd"/>
</dbReference>
<dbReference type="InterPro" id="IPR009081">
    <property type="entry name" value="PP-bd_ACP"/>
</dbReference>
<dbReference type="InterPro" id="IPR006162">
    <property type="entry name" value="Ppantetheine_attach_site"/>
</dbReference>
<dbReference type="InterPro" id="IPR054514">
    <property type="entry name" value="RhiE-like_linker"/>
</dbReference>
<dbReference type="InterPro" id="IPR016039">
    <property type="entry name" value="Thiolase-like"/>
</dbReference>
<dbReference type="NCBIfam" id="TIGR01733">
    <property type="entry name" value="AA-adenyl-dom"/>
    <property type="match status" value="1"/>
</dbReference>
<dbReference type="PANTHER" id="PTHR43775">
    <property type="entry name" value="FATTY ACID SYNTHASE"/>
    <property type="match status" value="1"/>
</dbReference>
<dbReference type="PANTHER" id="PTHR43775:SF37">
    <property type="entry name" value="SI:DKEY-61P9.11"/>
    <property type="match status" value="1"/>
</dbReference>
<dbReference type="Pfam" id="PF00501">
    <property type="entry name" value="AMP-binding"/>
    <property type="match status" value="2"/>
</dbReference>
<dbReference type="Pfam" id="PF13193">
    <property type="entry name" value="AMP-binding_C"/>
    <property type="match status" value="1"/>
</dbReference>
<dbReference type="Pfam" id="PF00668">
    <property type="entry name" value="Condensation"/>
    <property type="match status" value="1"/>
</dbReference>
<dbReference type="Pfam" id="PF00109">
    <property type="entry name" value="ketoacyl-synt"/>
    <property type="match status" value="3"/>
</dbReference>
<dbReference type="Pfam" id="PF02801">
    <property type="entry name" value="Ketoacyl-synt_C"/>
    <property type="match status" value="3"/>
</dbReference>
<dbReference type="Pfam" id="PF08659">
    <property type="entry name" value="KR"/>
    <property type="match status" value="2"/>
</dbReference>
<dbReference type="Pfam" id="PF21089">
    <property type="entry name" value="PKS_DH_N"/>
    <property type="match status" value="1"/>
</dbReference>
<dbReference type="Pfam" id="PF00550">
    <property type="entry name" value="PP-binding"/>
    <property type="match status" value="5"/>
</dbReference>
<dbReference type="Pfam" id="PF14765">
    <property type="entry name" value="PS-DH"/>
    <property type="match status" value="1"/>
</dbReference>
<dbReference type="Pfam" id="PF22336">
    <property type="entry name" value="RhiE-like_linker"/>
    <property type="match status" value="2"/>
</dbReference>
<dbReference type="SMART" id="SM00826">
    <property type="entry name" value="PKS_DH"/>
    <property type="match status" value="1"/>
</dbReference>
<dbReference type="SMART" id="SM00822">
    <property type="entry name" value="PKS_KR"/>
    <property type="match status" value="2"/>
</dbReference>
<dbReference type="SMART" id="SM00825">
    <property type="entry name" value="PKS_KS"/>
    <property type="match status" value="3"/>
</dbReference>
<dbReference type="SMART" id="SM00823">
    <property type="entry name" value="PKS_PP"/>
    <property type="match status" value="5"/>
</dbReference>
<dbReference type="SMART" id="SM01294">
    <property type="entry name" value="PKS_PP_betabranch"/>
    <property type="match status" value="4"/>
</dbReference>
<dbReference type="SUPFAM" id="SSF56801">
    <property type="entry name" value="Acetyl-CoA synthetase-like"/>
    <property type="match status" value="2"/>
</dbReference>
<dbReference type="SUPFAM" id="SSF47336">
    <property type="entry name" value="ACP-like"/>
    <property type="match status" value="5"/>
</dbReference>
<dbReference type="SUPFAM" id="SSF52777">
    <property type="entry name" value="CoA-dependent acyltransferases"/>
    <property type="match status" value="2"/>
</dbReference>
<dbReference type="SUPFAM" id="SSF51735">
    <property type="entry name" value="NAD(P)-binding Rossmann-fold domains"/>
    <property type="match status" value="3"/>
</dbReference>
<dbReference type="SUPFAM" id="SSF53901">
    <property type="entry name" value="Thiolase-like"/>
    <property type="match status" value="3"/>
</dbReference>
<dbReference type="PROSITE" id="PS00455">
    <property type="entry name" value="AMP_BINDING"/>
    <property type="match status" value="2"/>
</dbReference>
<dbReference type="PROSITE" id="PS50075">
    <property type="entry name" value="CARRIER"/>
    <property type="match status" value="5"/>
</dbReference>
<dbReference type="PROSITE" id="PS00606">
    <property type="entry name" value="KS3_1"/>
    <property type="match status" value="2"/>
</dbReference>
<dbReference type="PROSITE" id="PS52004">
    <property type="entry name" value="KS3_2"/>
    <property type="match status" value="3"/>
</dbReference>
<dbReference type="PROSITE" id="PS00012">
    <property type="entry name" value="PHOSPHOPANTETHEINE"/>
    <property type="match status" value="3"/>
</dbReference>
<dbReference type="PROSITE" id="PS52019">
    <property type="entry name" value="PKS_MFAS_DH"/>
    <property type="match status" value="1"/>
</dbReference>
<comment type="function">
    <text evidence="8 10">Involved in some intermediate steps for the synthesis of the antibiotic polyketide bacillaene which is involved in secondary metabolism.</text>
</comment>
<comment type="cofactor">
    <cofactor evidence="11">
        <name>pantetheine 4'-phosphate</name>
        <dbReference type="ChEBI" id="CHEBI:47942"/>
    </cofactor>
    <text evidence="11">Binds 5 phosphopantetheines covalently.</text>
</comment>
<comment type="pathway">
    <text>Antibiotic biosynthesis; bacillaene biosynthesis.</text>
</comment>
<comment type="subcellular location">
    <subcellularLocation>
        <location evidence="9">Cytoplasm</location>
    </subcellularLocation>
</comment>
<comment type="miscellaneous">
    <text>The acyl carrier 2 domain binds glycine.</text>
</comment>
<comment type="similarity">
    <text evidence="11">Belongs to the ATP-dependent AMP-binding enzyme family.</text>
</comment>
<comment type="caution">
    <text evidence="11">Was originally thought to be two separate ORFs named pksJ and pksK.</text>
</comment>
<accession>P40806</accession>
<accession>P40803</accession>
<reference key="1">
    <citation type="journal article" date="1995" name="Microbiology">
        <title>Sequence around the 159 degree region of the Bacillus subtilis genome: the pksX locus spans 33.6 kb.</title>
        <authorList>
            <person name="Albertini A.M."/>
            <person name="Caramori T."/>
            <person name="Scoffone F."/>
            <person name="Scotti C."/>
            <person name="Galizzi A."/>
        </authorList>
    </citation>
    <scope>NUCLEOTIDE SEQUENCE [GENOMIC DNA]</scope>
    <source>
        <strain>168 / PB1424</strain>
    </source>
</reference>
<reference key="2">
    <citation type="journal article" date="1997" name="Nature">
        <title>The complete genome sequence of the Gram-positive bacterium Bacillus subtilis.</title>
        <authorList>
            <person name="Kunst F."/>
            <person name="Ogasawara N."/>
            <person name="Moszer I."/>
            <person name="Albertini A.M."/>
            <person name="Alloni G."/>
            <person name="Azevedo V."/>
            <person name="Bertero M.G."/>
            <person name="Bessieres P."/>
            <person name="Bolotin A."/>
            <person name="Borchert S."/>
            <person name="Borriss R."/>
            <person name="Boursier L."/>
            <person name="Brans A."/>
            <person name="Braun M."/>
            <person name="Brignell S.C."/>
            <person name="Bron S."/>
            <person name="Brouillet S."/>
            <person name="Bruschi C.V."/>
            <person name="Caldwell B."/>
            <person name="Capuano V."/>
            <person name="Carter N.M."/>
            <person name="Choi S.-K."/>
            <person name="Codani J.-J."/>
            <person name="Connerton I.F."/>
            <person name="Cummings N.J."/>
            <person name="Daniel R.A."/>
            <person name="Denizot F."/>
            <person name="Devine K.M."/>
            <person name="Duesterhoeft A."/>
            <person name="Ehrlich S.D."/>
            <person name="Emmerson P.T."/>
            <person name="Entian K.-D."/>
            <person name="Errington J."/>
            <person name="Fabret C."/>
            <person name="Ferrari E."/>
            <person name="Foulger D."/>
            <person name="Fritz C."/>
            <person name="Fujita M."/>
            <person name="Fujita Y."/>
            <person name="Fuma S."/>
            <person name="Galizzi A."/>
            <person name="Galleron N."/>
            <person name="Ghim S.-Y."/>
            <person name="Glaser P."/>
            <person name="Goffeau A."/>
            <person name="Golightly E.J."/>
            <person name="Grandi G."/>
            <person name="Guiseppi G."/>
            <person name="Guy B.J."/>
            <person name="Haga K."/>
            <person name="Haiech J."/>
            <person name="Harwood C.R."/>
            <person name="Henaut A."/>
            <person name="Hilbert H."/>
            <person name="Holsappel S."/>
            <person name="Hosono S."/>
            <person name="Hullo M.-F."/>
            <person name="Itaya M."/>
            <person name="Jones L.-M."/>
            <person name="Joris B."/>
            <person name="Karamata D."/>
            <person name="Kasahara Y."/>
            <person name="Klaerr-Blanchard M."/>
            <person name="Klein C."/>
            <person name="Kobayashi Y."/>
            <person name="Koetter P."/>
            <person name="Koningstein G."/>
            <person name="Krogh S."/>
            <person name="Kumano M."/>
            <person name="Kurita K."/>
            <person name="Lapidus A."/>
            <person name="Lardinois S."/>
            <person name="Lauber J."/>
            <person name="Lazarevic V."/>
            <person name="Lee S.-M."/>
            <person name="Levine A."/>
            <person name="Liu H."/>
            <person name="Masuda S."/>
            <person name="Mauel C."/>
            <person name="Medigue C."/>
            <person name="Medina N."/>
            <person name="Mellado R.P."/>
            <person name="Mizuno M."/>
            <person name="Moestl D."/>
            <person name="Nakai S."/>
            <person name="Noback M."/>
            <person name="Noone D."/>
            <person name="O'Reilly M."/>
            <person name="Ogawa K."/>
            <person name="Ogiwara A."/>
            <person name="Oudega B."/>
            <person name="Park S.-H."/>
            <person name="Parro V."/>
            <person name="Pohl T.M."/>
            <person name="Portetelle D."/>
            <person name="Porwollik S."/>
            <person name="Prescott A.M."/>
            <person name="Presecan E."/>
            <person name="Pujic P."/>
            <person name="Purnelle B."/>
            <person name="Rapoport G."/>
            <person name="Rey M."/>
            <person name="Reynolds S."/>
            <person name="Rieger M."/>
            <person name="Rivolta C."/>
            <person name="Rocha E."/>
            <person name="Roche B."/>
            <person name="Rose M."/>
            <person name="Sadaie Y."/>
            <person name="Sato T."/>
            <person name="Scanlan E."/>
            <person name="Schleich S."/>
            <person name="Schroeter R."/>
            <person name="Scoffone F."/>
            <person name="Sekiguchi J."/>
            <person name="Sekowska A."/>
            <person name="Seror S.J."/>
            <person name="Serror P."/>
            <person name="Shin B.-S."/>
            <person name="Soldo B."/>
            <person name="Sorokin A."/>
            <person name="Tacconi E."/>
            <person name="Takagi T."/>
            <person name="Takahashi H."/>
            <person name="Takemaru K."/>
            <person name="Takeuchi M."/>
            <person name="Tamakoshi A."/>
            <person name="Tanaka T."/>
            <person name="Terpstra P."/>
            <person name="Tognoni A."/>
            <person name="Tosato V."/>
            <person name="Uchiyama S."/>
            <person name="Vandenbol M."/>
            <person name="Vannier F."/>
            <person name="Vassarotti A."/>
            <person name="Viari A."/>
            <person name="Wambutt R."/>
            <person name="Wedler E."/>
            <person name="Wedler H."/>
            <person name="Weitzenegger T."/>
            <person name="Winters P."/>
            <person name="Wipat A."/>
            <person name="Yamamoto H."/>
            <person name="Yamane K."/>
            <person name="Yasumoto K."/>
            <person name="Yata K."/>
            <person name="Yoshida K."/>
            <person name="Yoshikawa H.-F."/>
            <person name="Zumstein E."/>
            <person name="Yoshikawa H."/>
            <person name="Danchin A."/>
        </authorList>
    </citation>
    <scope>NUCLEOTIDE SEQUENCE [LARGE SCALE GENOMIC DNA]</scope>
    <source>
        <strain>168</strain>
    </source>
</reference>
<reference key="3">
    <citation type="journal article" date="1999" name="Genome Res.">
        <title>Detecting and analyzing DNA sequencing errors: toward a higher quality of the Bacillus subtilis genome sequence.</title>
        <authorList>
            <person name="Medigue C."/>
            <person name="Rose M."/>
            <person name="Viari A."/>
            <person name="Danchin A."/>
        </authorList>
    </citation>
    <scope>SEQUENCE REVISION</scope>
</reference>
<reference key="4">
    <citation type="journal article" date="2009" name="Microbiology">
        <title>From a consortium sequence to a unified sequence: the Bacillus subtilis 168 reference genome a decade later.</title>
        <authorList>
            <person name="Barbe V."/>
            <person name="Cruveiller S."/>
            <person name="Kunst F."/>
            <person name="Lenoble P."/>
            <person name="Meurice G."/>
            <person name="Sekowska A."/>
            <person name="Vallenet D."/>
            <person name="Wang T."/>
            <person name="Moszer I."/>
            <person name="Medigue C."/>
            <person name="Danchin A."/>
        </authorList>
    </citation>
    <scope>SEQUENCE REVISION TO 87; 619 AND 4981</scope>
</reference>
<reference key="5">
    <citation type="journal article" date="2006" name="Biochemistry">
        <title>Activity screening of carrier domains within nonribosomal peptide synthetases using complex substrate mixtures and large molecule mass spectrometry.</title>
        <authorList>
            <person name="Dorrestein P.C."/>
            <person name="Blackhall J."/>
            <person name="Straight P.D."/>
            <person name="Fischbach M.A."/>
            <person name="Garneau-Tsodikova S."/>
            <person name="Edwards D.J."/>
            <person name="McLaughlin S."/>
            <person name="Lin M."/>
            <person name="Gerwick W.H."/>
            <person name="Kolter R."/>
            <person name="Walsh C.T."/>
            <person name="Kelleher N.L."/>
        </authorList>
    </citation>
    <scope>FUNCTION AS AN ACYL CARRIER PROTEIN</scope>
    <scope>PHOSPHOPANTETHEINYLATION AT SER-1689</scope>
    <source>
        <strain>168 / Marburg / ATCC 6051 / DSM 10 / JCM 1465 / NBRC 13719 / NCIMB 3610 / NRRL NRS-744 / VKM B-501</strain>
    </source>
</reference>
<reference key="6">
    <citation type="journal article" date="2007" name="Proc. Natl. Acad. Sci. U.S.A.">
        <title>A singular enzymatic megacomplex from Bacillus subtilis.</title>
        <authorList>
            <person name="Straight P.D."/>
            <person name="Fischbach M.A."/>
            <person name="Walsh C.T."/>
            <person name="Rudner D.Z."/>
            <person name="Kolter R."/>
        </authorList>
    </citation>
    <scope>SUBCELLULAR LOCATION</scope>
    <source>
        <strain>168 / Marburg / ATCC 6051 / DSM 10 / JCM 1465 / NBRC 13719 / NCIMB 3610 / NRRL NRS-744 / VKM B-501</strain>
    </source>
</reference>
<reference key="7">
    <citation type="journal article" date="2007" name="Proc. Natl. Acad. Sci. U.S.A.">
        <title>The identification of bacillaene, the product of the PksX megacomplex in Bacillus subtilis.</title>
        <authorList>
            <person name="Butcher R.A."/>
            <person name="Schroeder F.C."/>
            <person name="Fischbach M.A."/>
            <person name="Straight P.D."/>
            <person name="Kolter R."/>
            <person name="Walsh C.T."/>
            <person name="Clardy J."/>
        </authorList>
    </citation>
    <scope>FUNCTION IN BACILLAENE BIOSYNTHESIS</scope>
    <source>
        <strain>168 / Marburg / ATCC 6051 / DSM 10 / JCM 1465 / NBRC 13719 / NCIMB 3610 / NRRL NRS-744 / VKM B-501</strain>
    </source>
</reference>
<organism>
    <name type="scientific">Bacillus subtilis (strain 168)</name>
    <dbReference type="NCBI Taxonomy" id="224308"/>
    <lineage>
        <taxon>Bacteria</taxon>
        <taxon>Bacillati</taxon>
        <taxon>Bacillota</taxon>
        <taxon>Bacilli</taxon>
        <taxon>Bacillales</taxon>
        <taxon>Bacillaceae</taxon>
        <taxon>Bacillus</taxon>
    </lineage>
</organism>
<feature type="chain" id="PRO_0000193184" description="Polyketide synthase PksJ">
    <location>
        <begin position="1"/>
        <end position="5043"/>
    </location>
</feature>
<feature type="domain" description="Carrier 1" evidence="3">
    <location>
        <begin position="590"/>
        <end position="667"/>
    </location>
</feature>
<feature type="domain" description="Carrier 2" evidence="3">
    <location>
        <begin position="1654"/>
        <end position="1729"/>
    </location>
</feature>
<feature type="domain" description="Ketosynthase family 3 (KS3) 1" evidence="4">
    <location>
        <begin position="1760"/>
        <end position="2186"/>
    </location>
</feature>
<feature type="domain" description="PKS/mFAS DH" evidence="5">
    <location>
        <begin position="2374"/>
        <end position="2661"/>
    </location>
</feature>
<feature type="domain" description="Carrier 3" evidence="3">
    <location>
        <begin position="3114"/>
        <end position="3188"/>
    </location>
</feature>
<feature type="domain" description="Carrier 4" evidence="3">
    <location>
        <begin position="3212"/>
        <end position="3286"/>
    </location>
</feature>
<feature type="domain" description="Ketosynthase family 3 (KS3) 2" evidence="4">
    <location>
        <begin position="3339"/>
        <end position="3779"/>
    </location>
</feature>
<feature type="domain" description="Carrier 5" evidence="3">
    <location>
        <begin position="4459"/>
        <end position="4536"/>
    </location>
</feature>
<feature type="domain" description="Ketosynthase family 3 (KS3) 3" evidence="4">
    <location>
        <begin position="4588"/>
        <end position="4992"/>
    </location>
</feature>
<feature type="region of interest" description="Adenylation 1">
    <location>
        <begin position="141"/>
        <end position="481"/>
    </location>
</feature>
<feature type="region of interest" description="Condensation" evidence="1">
    <location>
        <begin position="690"/>
        <end position="989"/>
    </location>
</feature>
<feature type="region of interest" description="Adenylation 2" evidence="1">
    <location>
        <begin position="1181"/>
        <end position="1578"/>
    </location>
</feature>
<feature type="region of interest" description="N-terminal hotdog fold" evidence="5">
    <location>
        <begin position="2374"/>
        <end position="2499"/>
    </location>
</feature>
<feature type="region of interest" description="C-terminal hotdog fold" evidence="5">
    <location>
        <begin position="2513"/>
        <end position="2661"/>
    </location>
</feature>
<feature type="region of interest" description="Disordered" evidence="7">
    <location>
        <begin position="3291"/>
        <end position="3314"/>
    </location>
</feature>
<feature type="coiled-coil region" evidence="2">
    <location>
        <begin position="3839"/>
        <end position="3872"/>
    </location>
</feature>
<feature type="active site" description="For beta-ketoacyl synthase 1 activity" evidence="4">
    <location>
        <position position="1932"/>
    </location>
</feature>
<feature type="active site" description="For beta-ketoacyl synthase 1 activity" evidence="4">
    <location>
        <position position="2068"/>
    </location>
</feature>
<feature type="active site" description="For beta-ketoacyl synthase 1 activity" evidence="4">
    <location>
        <position position="2108"/>
    </location>
</feature>
<feature type="active site" description="Proton acceptor; for dehydratase activity" evidence="5">
    <location>
        <position position="2403"/>
    </location>
</feature>
<feature type="active site" description="Proton donor; for dehydratase activity" evidence="5">
    <location>
        <position position="2575"/>
    </location>
</feature>
<feature type="active site" description="For beta-ketoacyl synthase 2 activity" evidence="4">
    <location>
        <position position="3511"/>
    </location>
</feature>
<feature type="active site" description="For beta-ketoacyl synthase 2 activity" evidence="4">
    <location>
        <position position="3646"/>
    </location>
</feature>
<feature type="active site" description="For beta-ketoacyl synthase 2 activity" evidence="4">
    <location>
        <position position="3695"/>
    </location>
</feature>
<feature type="active site" description="For beta-ketoacyl synthase 3 activity" evidence="6">
    <location>
        <position position="4743"/>
    </location>
</feature>
<feature type="modified residue" description="O-(pantetheine 4'-phosphoryl)serine" evidence="3">
    <location>
        <position position="627"/>
    </location>
</feature>
<feature type="modified residue" description="O-(pantetheine 4'-phosphoryl)serine" evidence="3 8">
    <location>
        <position position="1689"/>
    </location>
</feature>
<feature type="modified residue" description="O-(pantetheine 4'-phosphoryl)serine" evidence="3">
    <location>
        <position position="3148"/>
    </location>
</feature>
<feature type="modified residue" description="O-(pantetheine 4'-phosphoryl)serine" evidence="3">
    <location>
        <position position="3246"/>
    </location>
</feature>
<feature type="modified residue" description="O-(pantetheine 4'-phosphoryl)serine" evidence="3">
    <location>
        <position position="4496"/>
    </location>
</feature>
<feature type="sequence conflict" description="In Ref. 1; AAA85143." evidence="11" ref="1">
    <original>V</original>
    <variation>W</variation>
    <location>
        <position position="87"/>
    </location>
</feature>
<feature type="sequence conflict" description="In Ref. 1; AAA85144." evidence="11" ref="1">
    <original>N</original>
    <variation>NAN</variation>
    <location>
        <position position="619"/>
    </location>
</feature>
<feature type="sequence conflict" description="In Ref. 1; AAA85144." evidence="11" ref="1">
    <original>D</original>
    <variation>G</variation>
    <location>
        <position position="4981"/>
    </location>
</feature>
<feature type="strand" evidence="12">
    <location>
        <begin position="2669"/>
        <end position="2678"/>
    </location>
</feature>
<feature type="strand" evidence="12">
    <location>
        <begin position="2692"/>
        <end position="2700"/>
    </location>
</feature>
<feature type="helix" evidence="12">
    <location>
        <begin position="2703"/>
        <end position="2712"/>
    </location>
</feature>
<feature type="turn" evidence="12">
    <location>
        <begin position="2713"/>
        <end position="2715"/>
    </location>
</feature>
<feature type="strand" evidence="12">
    <location>
        <begin position="2716"/>
        <end position="2721"/>
    </location>
</feature>
<feature type="helix" evidence="12">
    <location>
        <begin position="2728"/>
        <end position="2745"/>
    </location>
</feature>
<feature type="helix" evidence="12">
    <location>
        <begin position="2747"/>
        <end position="2752"/>
    </location>
</feature>
<feature type="strand" evidence="12">
    <location>
        <begin position="2755"/>
        <end position="2762"/>
    </location>
</feature>
<feature type="helix" evidence="12">
    <location>
        <begin position="2767"/>
        <end position="2772"/>
    </location>
</feature>
<feature type="helix" evidence="12">
    <location>
        <begin position="2773"/>
        <end position="2783"/>
    </location>
</feature>
<feature type="strand" evidence="12">
    <location>
        <begin position="2787"/>
        <end position="2796"/>
    </location>
</feature>
<feature type="turn" evidence="12">
    <location>
        <begin position="2797"/>
        <end position="2799"/>
    </location>
</feature>
<feature type="helix" evidence="12">
    <location>
        <begin position="2803"/>
        <end position="2811"/>
    </location>
</feature>
<feature type="strand" evidence="12">
    <location>
        <begin position="2818"/>
        <end position="2822"/>
    </location>
</feature>
<feature type="strand" evidence="12">
    <location>
        <begin position="2825"/>
        <end position="2833"/>
    </location>
</feature>
<feature type="strand" evidence="12">
    <location>
        <begin position="2848"/>
        <end position="2855"/>
    </location>
</feature>
<feature type="turn" evidence="12">
    <location>
        <begin position="2856"/>
        <end position="2858"/>
    </location>
</feature>
<feature type="helix" evidence="12">
    <location>
        <begin position="2860"/>
        <end position="2873"/>
    </location>
</feature>
<feature type="strand" evidence="12">
    <location>
        <begin position="2877"/>
        <end position="2881"/>
    </location>
</feature>
<feature type="helix" evidence="12">
    <location>
        <begin position="2888"/>
        <end position="2899"/>
    </location>
</feature>
<feature type="strand" evidence="12">
    <location>
        <begin position="2903"/>
        <end position="2906"/>
    </location>
</feature>
<feature type="helix" evidence="12">
    <location>
        <begin position="2914"/>
        <end position="2927"/>
    </location>
</feature>
<feature type="strand" evidence="12">
    <location>
        <begin position="2933"/>
        <end position="2936"/>
    </location>
</feature>
<feature type="turn" evidence="12">
    <location>
        <begin position="2946"/>
        <end position="2948"/>
    </location>
</feature>
<feature type="helix" evidence="12">
    <location>
        <begin position="2951"/>
        <end position="2958"/>
    </location>
</feature>
<feature type="turn" evidence="12">
    <location>
        <begin position="2959"/>
        <end position="2962"/>
    </location>
</feature>
<feature type="helix" evidence="12">
    <location>
        <begin position="2963"/>
        <end position="2971"/>
    </location>
</feature>
<feature type="turn" evidence="12">
    <location>
        <begin position="2972"/>
        <end position="2974"/>
    </location>
</feature>
<feature type="strand" evidence="12">
    <location>
        <begin position="2978"/>
        <end position="2985"/>
    </location>
</feature>
<feature type="helix" evidence="12">
    <location>
        <begin position="2986"/>
        <end position="2990"/>
    </location>
</feature>
<feature type="helix" evidence="12">
    <location>
        <begin position="2996"/>
        <end position="3017"/>
    </location>
</feature>
<feature type="strand" evidence="12">
    <location>
        <begin position="3023"/>
        <end position="3030"/>
    </location>
</feature>
<feature type="helix" evidence="12">
    <location>
        <begin position="3044"/>
        <end position="3052"/>
    </location>
</feature>
<feature type="helix" evidence="12">
    <location>
        <begin position="3059"/>
        <end position="3072"/>
    </location>
</feature>
<feature type="strand" evidence="12">
    <location>
        <begin position="3075"/>
        <end position="3082"/>
    </location>
</feature>
<feature type="helix" evidence="12">
    <location>
        <begin position="3084"/>
        <end position="3091"/>
    </location>
</feature>
<feature type="strand" evidence="13">
    <location>
        <begin position="3342"/>
        <end position="3351"/>
    </location>
</feature>
<feature type="strand" evidence="13">
    <location>
        <begin position="3354"/>
        <end position="3356"/>
    </location>
</feature>
<feature type="helix" evidence="13">
    <location>
        <begin position="3357"/>
        <end position="3365"/>
    </location>
</feature>
<feature type="turn" evidence="13">
    <location>
        <begin position="3376"/>
        <end position="3378"/>
    </location>
</feature>
<feature type="helix" evidence="13">
    <location>
        <begin position="3381"/>
        <end position="3384"/>
    </location>
</feature>
<feature type="turn" evidence="13">
    <location>
        <begin position="3388"/>
        <end position="3390"/>
    </location>
</feature>
<feature type="strand" evidence="13">
    <location>
        <begin position="3399"/>
        <end position="3401"/>
    </location>
</feature>
<feature type="strand" evidence="14">
    <location>
        <begin position="3406"/>
        <end position="3409"/>
    </location>
</feature>
<feature type="helix" evidence="13">
    <location>
        <begin position="3411"/>
        <end position="3414"/>
    </location>
</feature>
<feature type="helix" evidence="13">
    <location>
        <begin position="3418"/>
        <end position="3421"/>
    </location>
</feature>
<feature type="helix" evidence="13">
    <location>
        <begin position="3426"/>
        <end position="3442"/>
    </location>
</feature>
<feature type="helix" evidence="13">
    <location>
        <begin position="3446"/>
        <end position="3449"/>
    </location>
</feature>
<feature type="strand" evidence="13">
    <location>
        <begin position="3455"/>
        <end position="3459"/>
    </location>
</feature>
<feature type="helix" evidence="13">
    <location>
        <begin position="3465"/>
        <end position="3471"/>
    </location>
</feature>
<feature type="helix" evidence="13">
    <location>
        <begin position="3480"/>
        <end position="3484"/>
    </location>
</feature>
<feature type="helix" evidence="13">
    <location>
        <begin position="3489"/>
        <end position="3498"/>
    </location>
</feature>
<feature type="strand" evidence="13">
    <location>
        <begin position="3504"/>
        <end position="3507"/>
    </location>
</feature>
<feature type="helix" evidence="13">
    <location>
        <begin position="3510"/>
        <end position="3512"/>
    </location>
</feature>
<feature type="helix" evidence="13">
    <location>
        <begin position="3513"/>
        <end position="3526"/>
    </location>
</feature>
<feature type="strand" evidence="13">
    <location>
        <begin position="3531"/>
        <end position="3539"/>
    </location>
</feature>
<feature type="helix" evidence="13">
    <location>
        <begin position="3545"/>
        <end position="3552"/>
    </location>
</feature>
<feature type="strand" evidence="13">
    <location>
        <begin position="3577"/>
        <end position="3585"/>
    </location>
</feature>
<feature type="helix" evidence="13">
    <location>
        <begin position="3586"/>
        <end position="3592"/>
    </location>
</feature>
<feature type="strand" evidence="13">
    <location>
        <begin position="3597"/>
        <end position="3607"/>
    </location>
</feature>
<feature type="helix" evidence="13">
    <location>
        <begin position="3619"/>
        <end position="3633"/>
    </location>
</feature>
<feature type="helix" evidence="13">
    <location>
        <begin position="3637"/>
        <end position="3639"/>
    </location>
</feature>
<feature type="strand" evidence="13">
    <location>
        <begin position="3642"/>
        <end position="3644"/>
    </location>
</feature>
<feature type="helix" evidence="13">
    <location>
        <begin position="3653"/>
        <end position="3669"/>
    </location>
</feature>
<feature type="strand" evidence="14">
    <location>
        <begin position="3679"/>
        <end position="3681"/>
    </location>
</feature>
<feature type="strand" evidence="13">
    <location>
        <begin position="3684"/>
        <end position="3687"/>
    </location>
</feature>
<feature type="helix" evidence="13">
    <location>
        <begin position="3690"/>
        <end position="3693"/>
    </location>
</feature>
<feature type="helix" evidence="13">
    <location>
        <begin position="3697"/>
        <end position="3699"/>
    </location>
</feature>
<feature type="helix" evidence="13">
    <location>
        <begin position="3700"/>
        <end position="3713"/>
    </location>
</feature>
<feature type="strand" evidence="13">
    <location>
        <begin position="3724"/>
        <end position="3726"/>
    </location>
</feature>
<feature type="strand" evidence="13">
    <location>
        <begin position="3735"/>
        <end position="3739"/>
    </location>
</feature>
<feature type="strand" evidence="13">
    <location>
        <begin position="3752"/>
        <end position="3754"/>
    </location>
</feature>
<feature type="strand" evidence="13">
    <location>
        <begin position="3760"/>
        <end position="3766"/>
    </location>
</feature>
<feature type="strand" evidence="13">
    <location>
        <begin position="3770"/>
        <end position="3778"/>
    </location>
</feature>
<feature type="strand" evidence="13">
    <location>
        <begin position="3795"/>
        <end position="3803"/>
    </location>
</feature>
<feature type="helix" evidence="13">
    <location>
        <begin position="3804"/>
        <end position="3819"/>
    </location>
</feature>
<feature type="helix" evidence="13">
    <location>
        <begin position="3825"/>
        <end position="3827"/>
    </location>
</feature>
<feature type="helix" evidence="13">
    <location>
        <begin position="3828"/>
        <end position="3837"/>
    </location>
</feature>
<feature type="strand" evidence="13">
    <location>
        <begin position="3843"/>
        <end position="3852"/>
    </location>
</feature>
<feature type="helix" evidence="13">
    <location>
        <begin position="3853"/>
        <end position="3865"/>
    </location>
</feature>
<feature type="strand" evidence="13">
    <location>
        <begin position="3870"/>
        <end position="3877"/>
    </location>
</feature>
<feature type="helix" evidence="13">
    <location>
        <begin position="3878"/>
        <end position="3880"/>
    </location>
</feature>
<feature type="helix" evidence="13">
    <location>
        <begin position="3884"/>
        <end position="3890"/>
    </location>
</feature>
<feature type="helix" evidence="13">
    <location>
        <begin position="3892"/>
        <end position="3903"/>
    </location>
</feature>
<feature type="helix" evidence="13">
    <location>
        <begin position="3907"/>
        <end position="3915"/>
    </location>
</feature>
<feature type="helix" evidence="13">
    <location>
        <begin position="3922"/>
        <end position="3925"/>
    </location>
</feature>
<feature type="strand" evidence="15">
    <location>
        <begin position="3969"/>
        <end position="3979"/>
    </location>
</feature>
<feature type="strand" evidence="15">
    <location>
        <begin position="3990"/>
        <end position="3996"/>
    </location>
</feature>
<feature type="helix" evidence="15">
    <location>
        <begin position="3998"/>
        <end position="4000"/>
    </location>
</feature>
<feature type="helix" evidence="15">
    <location>
        <begin position="4001"/>
        <end position="4008"/>
    </location>
</feature>
<feature type="strand" evidence="15">
    <location>
        <begin position="4012"/>
        <end position="4018"/>
    </location>
</feature>
<feature type="helix" evidence="15">
    <location>
        <begin position="4031"/>
        <end position="4033"/>
    </location>
</feature>
<feature type="strand" evidence="15">
    <location>
        <begin position="4034"/>
        <end position="4039"/>
    </location>
</feature>
<feature type="helix" evidence="15">
    <location>
        <begin position="4041"/>
        <end position="4043"/>
    </location>
</feature>
<feature type="helix" evidence="15">
    <location>
        <begin position="4053"/>
        <end position="4063"/>
    </location>
</feature>
<feature type="strand" evidence="15">
    <location>
        <begin position="4069"/>
        <end position="4077"/>
    </location>
</feature>
<feature type="helix" evidence="15">
    <location>
        <begin position="4091"/>
        <end position="4103"/>
    </location>
</feature>
<feature type="strand" evidence="15">
    <location>
        <begin position="4107"/>
        <end position="4114"/>
    </location>
</feature>
<feature type="helix" evidence="15">
    <location>
        <begin position="4120"/>
        <end position="4131"/>
    </location>
</feature>
<feature type="strand" evidence="15">
    <location>
        <begin position="4138"/>
        <end position="4143"/>
    </location>
</feature>
<feature type="strand" evidence="15">
    <location>
        <begin position="4146"/>
        <end position="4154"/>
    </location>
</feature>
<feature type="turn" evidence="15">
    <location>
        <begin position="4156"/>
        <end position="4158"/>
    </location>
</feature>
<feature type="strand" evidence="15">
    <location>
        <begin position="4172"/>
        <end position="4177"/>
    </location>
</feature>
<feature type="helix" evidence="15">
    <location>
        <begin position="4182"/>
        <end position="4194"/>
    </location>
</feature>
<feature type="strand" evidence="15">
    <location>
        <begin position="4199"/>
        <end position="4205"/>
    </location>
</feature>
<feature type="helix" evidence="15">
    <location>
        <begin position="4211"/>
        <end position="4217"/>
    </location>
</feature>
<feature type="helix" evidence="15">
    <location>
        <begin position="4223"/>
        <end position="4236"/>
    </location>
</feature>
<feature type="strand" evidence="15">
    <location>
        <begin position="4240"/>
        <end position="4245"/>
    </location>
</feature>
<feature type="helix" evidence="15">
    <location>
        <begin position="4251"/>
        <end position="4264"/>
    </location>
</feature>
<feature type="strand" evidence="15">
    <location>
        <begin position="4268"/>
        <end position="4273"/>
    </location>
</feature>
<feature type="helix" evidence="15">
    <location>
        <begin position="4285"/>
        <end position="4287"/>
    </location>
</feature>
<feature type="helix" evidence="15">
    <location>
        <begin position="4290"/>
        <end position="4297"/>
    </location>
</feature>
<feature type="turn" evidence="15">
    <location>
        <begin position="4298"/>
        <end position="4301"/>
    </location>
</feature>
<feature type="helix" evidence="15">
    <location>
        <begin position="4302"/>
        <end position="4311"/>
    </location>
</feature>
<feature type="strand" evidence="15">
    <location>
        <begin position="4319"/>
        <end position="4324"/>
    </location>
</feature>
<feature type="helix" evidence="15">
    <location>
        <begin position="4325"/>
        <end position="4327"/>
    </location>
</feature>
<feature type="helix" evidence="15">
    <location>
        <begin position="4330"/>
        <end position="4333"/>
    </location>
</feature>
<feature type="helix" evidence="15">
    <location>
        <begin position="4337"/>
        <end position="4353"/>
    </location>
</feature>
<feature type="turn" evidence="15">
    <location>
        <begin position="4354"/>
        <end position="4356"/>
    </location>
</feature>
<feature type="strand" evidence="15">
    <location>
        <begin position="4359"/>
        <end position="4364"/>
    </location>
</feature>
<feature type="strand" evidence="15">
    <location>
        <begin position="4367"/>
        <end position="4370"/>
    </location>
</feature>
<feature type="helix" evidence="15">
    <location>
        <begin position="4378"/>
        <end position="4383"/>
    </location>
</feature>
<feature type="helix" evidence="15">
    <location>
        <begin position="4390"/>
        <end position="4402"/>
    </location>
</feature>
<feature type="strand" evidence="15">
    <location>
        <begin position="4407"/>
        <end position="4414"/>
    </location>
</feature>
<feature type="helix" evidence="15">
    <location>
        <begin position="4421"/>
        <end position="4423"/>
    </location>
</feature>